<dbReference type="EC" id="4.2.1.-" evidence="1 2"/>
<dbReference type="EMBL" id="X54543">
    <property type="protein sequence ID" value="CAA38416.1"/>
    <property type="status" value="ALT_INIT"/>
    <property type="molecule type" value="Genomic_DNA"/>
</dbReference>
<dbReference type="EMBL" id="U29579">
    <property type="protein sequence ID" value="AAA69240.1"/>
    <property type="status" value="ALT_INIT"/>
    <property type="molecule type" value="Genomic_DNA"/>
</dbReference>
<dbReference type="EMBL" id="U00096">
    <property type="protein sequence ID" value="AAC75772.2"/>
    <property type="molecule type" value="Genomic_DNA"/>
</dbReference>
<dbReference type="EMBL" id="AP009048">
    <property type="protein sequence ID" value="BAE76807.1"/>
    <property type="status" value="ALT_INIT"/>
    <property type="molecule type" value="Genomic_DNA"/>
</dbReference>
<dbReference type="PIR" id="S15201">
    <property type="entry name" value="S15201"/>
</dbReference>
<dbReference type="RefSeq" id="NP_417210.2">
    <property type="nucleotide sequence ID" value="NC_000913.3"/>
</dbReference>
<dbReference type="RefSeq" id="WP_001059922.1">
    <property type="nucleotide sequence ID" value="NZ_LN832404.1"/>
</dbReference>
<dbReference type="PDB" id="2I6R">
    <property type="method" value="X-ray"/>
    <property type="resolution" value="2.51 A"/>
    <property type="chains" value="A/B/C/D=15-336"/>
</dbReference>
<dbReference type="PDBsum" id="2I6R"/>
<dbReference type="SMR" id="P24193"/>
<dbReference type="BioGRID" id="4261424">
    <property type="interactions" value="24"/>
</dbReference>
<dbReference type="BioGRID" id="851514">
    <property type="interactions" value="6"/>
</dbReference>
<dbReference type="ComplexPortal" id="CPX-5281">
    <property type="entry name" value="HypEF Ni-hydrogenase maturation complex"/>
</dbReference>
<dbReference type="ComplexPortal" id="CPX-5283">
    <property type="entry name" value="Hybg-HypDE Ni-hydrogenase maturation complex"/>
</dbReference>
<dbReference type="ComplexPortal" id="CPX-5284">
    <property type="entry name" value="HypCDE Ni-hydrogenase maturation complex"/>
</dbReference>
<dbReference type="DIP" id="DIP-9999N"/>
<dbReference type="FunCoup" id="P24193">
    <property type="interactions" value="127"/>
</dbReference>
<dbReference type="IntAct" id="P24193">
    <property type="interactions" value="10"/>
</dbReference>
<dbReference type="STRING" id="511145.b2730"/>
<dbReference type="jPOST" id="P24193"/>
<dbReference type="PaxDb" id="511145-b2730"/>
<dbReference type="EnsemblBacteria" id="AAC75772">
    <property type="protein sequence ID" value="AAC75772"/>
    <property type="gene ID" value="b2730"/>
</dbReference>
<dbReference type="GeneID" id="947182"/>
<dbReference type="KEGG" id="ecj:JW2700"/>
<dbReference type="KEGG" id="eco:b2730"/>
<dbReference type="KEGG" id="ecoc:C3026_15020"/>
<dbReference type="PATRIC" id="fig|1411691.4.peg.4011"/>
<dbReference type="EchoBASE" id="EB0482"/>
<dbReference type="eggNOG" id="COG0309">
    <property type="taxonomic scope" value="Bacteria"/>
</dbReference>
<dbReference type="HOGENOM" id="CLU_049733_0_0_6"/>
<dbReference type="InParanoid" id="P24193"/>
<dbReference type="OMA" id="CGNGGKE"/>
<dbReference type="OrthoDB" id="9801934at2"/>
<dbReference type="PhylomeDB" id="P24193"/>
<dbReference type="BioCyc" id="EcoCyc:EG10487-MONOMER"/>
<dbReference type="BioCyc" id="MetaCyc:EG10487-MONOMER"/>
<dbReference type="UniPathway" id="UPA00335"/>
<dbReference type="EvolutionaryTrace" id="P24193"/>
<dbReference type="PRO" id="PR:P24193"/>
<dbReference type="Proteomes" id="UP000000625">
    <property type="component" value="Chromosome"/>
</dbReference>
<dbReference type="GO" id="GO:1904949">
    <property type="term" value="C:ATPase complex"/>
    <property type="evidence" value="ECO:0000353"/>
    <property type="project" value="ComplexPortal"/>
</dbReference>
<dbReference type="GO" id="GO:0016829">
    <property type="term" value="F:lyase activity"/>
    <property type="evidence" value="ECO:0007669"/>
    <property type="project" value="UniProtKB-KW"/>
</dbReference>
<dbReference type="GO" id="GO:0051604">
    <property type="term" value="P:protein maturation"/>
    <property type="evidence" value="ECO:0000315"/>
    <property type="project" value="EcoCyc"/>
</dbReference>
<dbReference type="GO" id="GO:0065003">
    <property type="term" value="P:protein-containing complex assembly"/>
    <property type="evidence" value="ECO:0000314"/>
    <property type="project" value="ComplexPortal"/>
</dbReference>
<dbReference type="CDD" id="cd02197">
    <property type="entry name" value="HypE"/>
    <property type="match status" value="1"/>
</dbReference>
<dbReference type="FunFam" id="3.30.1330.10:FF:000015">
    <property type="entry name" value="Hydrogenase expression/formation protein HypE"/>
    <property type="match status" value="1"/>
</dbReference>
<dbReference type="FunFam" id="3.90.650.10:FF:000015">
    <property type="entry name" value="Hydrogenase expression/formation protein HypE"/>
    <property type="match status" value="1"/>
</dbReference>
<dbReference type="Gene3D" id="3.90.650.10">
    <property type="entry name" value="PurM-like C-terminal domain"/>
    <property type="match status" value="1"/>
</dbReference>
<dbReference type="Gene3D" id="3.30.1330.10">
    <property type="entry name" value="PurM-like, N-terminal domain"/>
    <property type="match status" value="1"/>
</dbReference>
<dbReference type="InterPro" id="IPR011854">
    <property type="entry name" value="HypE"/>
</dbReference>
<dbReference type="InterPro" id="IPR010918">
    <property type="entry name" value="PurM-like_C_dom"/>
</dbReference>
<dbReference type="InterPro" id="IPR036676">
    <property type="entry name" value="PurM-like_C_sf"/>
</dbReference>
<dbReference type="InterPro" id="IPR016188">
    <property type="entry name" value="PurM-like_N"/>
</dbReference>
<dbReference type="InterPro" id="IPR036921">
    <property type="entry name" value="PurM-like_N_sf"/>
</dbReference>
<dbReference type="NCBIfam" id="TIGR02124">
    <property type="entry name" value="hypE"/>
    <property type="match status" value="1"/>
</dbReference>
<dbReference type="PANTHER" id="PTHR30303:SF0">
    <property type="entry name" value="CARBAMOYL DEHYDRATASE HYPE"/>
    <property type="match status" value="1"/>
</dbReference>
<dbReference type="PANTHER" id="PTHR30303">
    <property type="entry name" value="HYDROGENASE ISOENZYMES FORMATION PROTEIN HYPE"/>
    <property type="match status" value="1"/>
</dbReference>
<dbReference type="Pfam" id="PF00586">
    <property type="entry name" value="AIRS"/>
    <property type="match status" value="1"/>
</dbReference>
<dbReference type="Pfam" id="PF02769">
    <property type="entry name" value="AIRS_C"/>
    <property type="match status" value="1"/>
</dbReference>
<dbReference type="PIRSF" id="PIRSF005644">
    <property type="entry name" value="Hdrgns_mtr_HypE"/>
    <property type="match status" value="1"/>
</dbReference>
<dbReference type="SUPFAM" id="SSF56042">
    <property type="entry name" value="PurM C-terminal domain-like"/>
    <property type="match status" value="1"/>
</dbReference>
<dbReference type="SUPFAM" id="SSF55326">
    <property type="entry name" value="PurM N-terminal domain-like"/>
    <property type="match status" value="1"/>
</dbReference>
<gene>
    <name evidence="6" type="primary">hypE</name>
    <name type="ordered locus">b2730</name>
    <name type="ordered locus">JW2700</name>
</gene>
<feature type="chain" id="PRO_0000201459" description="Carbamoyl dehydratase HypE">
    <location>
        <begin position="1"/>
        <end position="336"/>
    </location>
</feature>
<feature type="modified residue" description="S-carbamoylcysteine; by HypF; alternate" evidence="1 2">
    <location>
        <position position="336"/>
    </location>
</feature>
<feature type="modified residue" description="S-cyanocysteine; by autocatalysis; alternate" evidence="1 2">
    <location>
        <position position="336"/>
    </location>
</feature>
<feature type="mutagenesis site" description="Lack of ATPase activity." evidence="2">
    <original>D</original>
    <variation>N</variation>
    <location>
        <position position="83"/>
    </location>
</feature>
<feature type="helix" evidence="9">
    <location>
        <begin position="15"/>
        <end position="27"/>
    </location>
</feature>
<feature type="turn" evidence="9">
    <location>
        <begin position="30"/>
        <end position="32"/>
    </location>
</feature>
<feature type="strand" evidence="9">
    <location>
        <begin position="37"/>
        <end position="42"/>
    </location>
</feature>
<feature type="helix" evidence="9">
    <location>
        <begin position="43"/>
        <end position="49"/>
    </location>
</feature>
<feature type="strand" evidence="9">
    <location>
        <begin position="51"/>
        <end position="60"/>
    </location>
</feature>
<feature type="strand" evidence="9">
    <location>
        <begin position="63"/>
        <end position="67"/>
    </location>
</feature>
<feature type="helix" evidence="9">
    <location>
        <begin position="72"/>
        <end position="85"/>
    </location>
</feature>
<feature type="turn" evidence="9">
    <location>
        <begin position="86"/>
        <end position="88"/>
    </location>
</feature>
<feature type="strand" evidence="9">
    <location>
        <begin position="93"/>
        <end position="101"/>
    </location>
</feature>
<feature type="helix" evidence="9">
    <location>
        <begin position="106"/>
        <end position="122"/>
    </location>
</feature>
<feature type="strand" evidence="9">
    <location>
        <begin position="126"/>
        <end position="135"/>
    </location>
</feature>
<feature type="strand" evidence="9">
    <location>
        <begin position="139"/>
        <end position="153"/>
    </location>
</feature>
<feature type="helix" evidence="9">
    <location>
        <begin position="161"/>
        <end position="163"/>
    </location>
</feature>
<feature type="strand" evidence="9">
    <location>
        <begin position="169"/>
        <end position="174"/>
    </location>
</feature>
<feature type="helix" evidence="9">
    <location>
        <begin position="178"/>
        <end position="188"/>
    </location>
</feature>
<feature type="helix" evidence="9">
    <location>
        <begin position="204"/>
        <end position="207"/>
    </location>
</feature>
<feature type="turn" evidence="9">
    <location>
        <begin position="208"/>
        <end position="212"/>
    </location>
</feature>
<feature type="strand" evidence="9">
    <location>
        <begin position="216"/>
        <end position="221"/>
    </location>
</feature>
<feature type="helix" evidence="9">
    <location>
        <begin position="226"/>
        <end position="237"/>
    </location>
</feature>
<feature type="strand" evidence="9">
    <location>
        <begin position="240"/>
        <end position="245"/>
    </location>
</feature>
<feature type="turn" evidence="9">
    <location>
        <begin position="246"/>
        <end position="248"/>
    </location>
</feature>
<feature type="helix" evidence="9">
    <location>
        <begin position="253"/>
        <end position="262"/>
    </location>
</feature>
<feature type="turn" evidence="9">
    <location>
        <begin position="266"/>
        <end position="268"/>
    </location>
</feature>
<feature type="strand" evidence="9">
    <location>
        <begin position="275"/>
        <end position="279"/>
    </location>
</feature>
<feature type="helix" evidence="9">
    <location>
        <begin position="281"/>
        <end position="283"/>
    </location>
</feature>
<feature type="helix" evidence="9">
    <location>
        <begin position="284"/>
        <end position="292"/>
    </location>
</feature>
<feature type="helix" evidence="9">
    <location>
        <begin position="295"/>
        <end position="297"/>
    </location>
</feature>
<feature type="strand" evidence="9">
    <location>
        <begin position="301"/>
        <end position="309"/>
    </location>
</feature>
<feature type="strand" evidence="9">
    <location>
        <begin position="311"/>
        <end position="315"/>
    </location>
</feature>
<feature type="helix" evidence="9">
    <location>
        <begin position="317"/>
        <end position="319"/>
    </location>
</feature>
<feature type="strand" evidence="9">
    <location>
        <begin position="321"/>
        <end position="323"/>
    </location>
</feature>
<organism>
    <name type="scientific">Escherichia coli (strain K12)</name>
    <dbReference type="NCBI Taxonomy" id="83333"/>
    <lineage>
        <taxon>Bacteria</taxon>
        <taxon>Pseudomonadati</taxon>
        <taxon>Pseudomonadota</taxon>
        <taxon>Gammaproteobacteria</taxon>
        <taxon>Enterobacterales</taxon>
        <taxon>Enterobacteriaceae</taxon>
        <taxon>Escherichia</taxon>
    </lineage>
</organism>
<reference key="1">
    <citation type="journal article" date="1991" name="Mol. Microbiol.">
        <title>Molecular characterization of an operon (hyp) necessary for the activity of the three hydrogenase isoenzymes in Escherichia coli.</title>
        <authorList>
            <person name="Lutz S."/>
            <person name="Jacobi A."/>
            <person name="Schlensog V."/>
            <person name="Boehm R."/>
            <person name="Sawers G."/>
            <person name="Boeck A."/>
        </authorList>
    </citation>
    <scope>NUCLEOTIDE SEQUENCE [GENOMIC DNA]</scope>
</reference>
<reference key="2">
    <citation type="journal article" date="1997" name="Science">
        <title>The complete genome sequence of Escherichia coli K-12.</title>
        <authorList>
            <person name="Blattner F.R."/>
            <person name="Plunkett G. III"/>
            <person name="Bloch C.A."/>
            <person name="Perna N.T."/>
            <person name="Burland V."/>
            <person name="Riley M."/>
            <person name="Collado-Vides J."/>
            <person name="Glasner J.D."/>
            <person name="Rode C.K."/>
            <person name="Mayhew G.F."/>
            <person name="Gregor J."/>
            <person name="Davis N.W."/>
            <person name="Kirkpatrick H.A."/>
            <person name="Goeden M.A."/>
            <person name="Rose D.J."/>
            <person name="Mau B."/>
            <person name="Shao Y."/>
        </authorList>
    </citation>
    <scope>NUCLEOTIDE SEQUENCE [LARGE SCALE GENOMIC DNA]</scope>
    <source>
        <strain>K12 / MG1655 / ATCC 47076</strain>
    </source>
</reference>
<reference key="3">
    <citation type="journal article" date="2006" name="Mol. Syst. Biol.">
        <title>Highly accurate genome sequences of Escherichia coli K-12 strains MG1655 and W3110.</title>
        <authorList>
            <person name="Hayashi K."/>
            <person name="Morooka N."/>
            <person name="Yamamoto Y."/>
            <person name="Fujita K."/>
            <person name="Isono K."/>
            <person name="Choi S."/>
            <person name="Ohtsubo E."/>
            <person name="Baba T."/>
            <person name="Wanner B.L."/>
            <person name="Mori H."/>
            <person name="Horiuchi T."/>
        </authorList>
    </citation>
    <scope>NUCLEOTIDE SEQUENCE [LARGE SCALE GENOMIC DNA]</scope>
    <source>
        <strain>K12 / W3110 / ATCC 27325 / DSM 5911</strain>
    </source>
</reference>
<reference key="4">
    <citation type="journal article" date="2004" name="Eur. J. Biochem.">
        <title>Analysis of the transcarbamoylation-dehydration reaction catalyzed by the hydrogenase maturation proteins HypF and HypE.</title>
        <authorList>
            <person name="Blokesch M."/>
            <person name="Paschos A."/>
            <person name="Bauer A."/>
            <person name="Reissmann S."/>
            <person name="Drapal N."/>
            <person name="Boeck A."/>
        </authorList>
    </citation>
    <scope>PROTEIN SEQUENCE OF 1-9</scope>
    <scope>FUNCTION</scope>
    <scope>CATALYTIC ACTIVITY</scope>
    <scope>CARBAMYLATION AT CYS-336</scope>
    <scope>CYANYLATION AT CYS-336</scope>
    <scope>INTERACTION WITH HYPF</scope>
    <scope>MUTAGENESIS OF ASP-83</scope>
</reference>
<reference key="5">
    <citation type="journal article" date="1997" name="Electrophoresis">
        <title>Escherichia coli proteome analysis using the gene-protein database.</title>
        <authorList>
            <person name="VanBogelen R.A."/>
            <person name="Abshire K.Z."/>
            <person name="Moldover B."/>
            <person name="Olson E.R."/>
            <person name="Neidhardt F.C."/>
        </authorList>
    </citation>
    <scope>IDENTIFICATION BY 2D-GEL</scope>
</reference>
<reference key="6">
    <citation type="journal article" date="2003" name="Science">
        <title>Taming of a poison: biosynthesis of the NiFe-hydrogenase cyanide ligands.</title>
        <authorList>
            <person name="Reissmann S."/>
            <person name="Hochleitner E."/>
            <person name="Wang H."/>
            <person name="Paschos A."/>
            <person name="Lottspeich F."/>
            <person name="Glass R.S."/>
            <person name="Boeck A."/>
        </authorList>
    </citation>
    <scope>FUNCTION</scope>
    <scope>CATALYTIC ACTIVITY</scope>
    <scope>CARBAMYLATION AT CYS-336</scope>
    <scope>CYANYLATION AT CYS-336</scope>
</reference>
<reference key="7">
    <citation type="journal article" date="2004" name="J. Mol. Biol.">
        <title>The complex between hydrogenase-maturation proteins HypC and HypD is an intermediate in the supply of cyanide to the active site iron of [NiFe]-hydrogenases.</title>
        <authorList>
            <person name="Blokesch M."/>
            <person name="Albracht S.P."/>
            <person name="Matzanke B.F."/>
            <person name="Drapal N.M."/>
            <person name="Jacobi A."/>
            <person name="Boeck A."/>
        </authorList>
    </citation>
    <scope>FUNCTION</scope>
    <scope>INTERACTION WITH HYPC AND HYPD</scope>
</reference>
<reference key="8">
    <citation type="journal article" date="2006" name="FEBS Lett.">
        <title>Interactions of the Escherichia coli hydrogenase biosynthetic proteins: HybG complex formation.</title>
        <authorList>
            <person name="Butland G."/>
            <person name="Zhang J.W."/>
            <person name="Yang W."/>
            <person name="Sheung A."/>
            <person name="Wong P."/>
            <person name="Greenblatt J.F."/>
            <person name="Emili A."/>
            <person name="Zamble D.B."/>
        </authorList>
    </citation>
    <scope>INTERACTION WITH HYBG AND HYPD</scope>
</reference>
<reference evidence="8" key="9">
    <citation type="journal article" date="2008" name="J. Bacteriol.">
        <title>Structure of [NiFe] hydrogenase maturation protein HypE from Escherichia coli and its interaction with HypF.</title>
        <authorList>
            <person name="Rangarajan E.S."/>
            <person name="Asinas A."/>
            <person name="Proteau A."/>
            <person name="Munger C."/>
            <person name="Baardsnes J."/>
            <person name="Iannuzzi P."/>
            <person name="Matte A."/>
            <person name="Cygler M."/>
        </authorList>
    </citation>
    <scope>X-RAY CRYSTALLOGRAPHY (2.51 ANGSTROMS) OF 15-336</scope>
    <scope>SUBUNIT</scope>
    <scope>INTERACTION WITH HYPF</scope>
</reference>
<proteinExistence type="evidence at protein level"/>
<comment type="function">
    <text evidence="1 2 3">Involved in the maturation of [NiFe] hydrogenases. Along with HypF, it catalyzes the synthesis of the CN ligands of the active site iron of [NiFe]-hydrogenases. HypE catalyzes the ATP-dependent dehydration of the carboxamido group attached to its C-terminal cysteine to a cyano group (PubMed:12586941, PubMed:15291820). The cyano group is then transferred from HypE to the HypC-HypD complex or the HybG-HypD complex (PubMed:15504408).</text>
</comment>
<comment type="catalytic activity">
    <reaction evidence="1 2">
        <text>C-terminal S-carboxamide-L-cysteinyl-[HypE protein] + ATP = C-terminal S-cyanate-L-cysteinyl-[HypE protein] + ADP + phosphate + H(+)</text>
        <dbReference type="Rhea" id="RHEA:55644"/>
        <dbReference type="Rhea" id="RHEA-COMP:14247"/>
        <dbReference type="Rhea" id="RHEA-COMP:14248"/>
        <dbReference type="ChEBI" id="CHEBI:15378"/>
        <dbReference type="ChEBI" id="CHEBI:30616"/>
        <dbReference type="ChEBI" id="CHEBI:43474"/>
        <dbReference type="ChEBI" id="CHEBI:139126"/>
        <dbReference type="ChEBI" id="CHEBI:139127"/>
        <dbReference type="ChEBI" id="CHEBI:456216"/>
    </reaction>
</comment>
<comment type="pathway">
    <text evidence="7">Protein modification; [NiFe] hydrogenase maturation.</text>
</comment>
<comment type="subunit">
    <text evidence="2 3 4 5">Homodimer (PubMed:18065529). Forms a complex with HypF (PubMed:15291820, PubMed:18065529). Also forms a complex with HypC, or HybG, and HypD (PubMed:15504408, PubMed:16412426).</text>
</comment>
<comment type="interaction">
    <interactant intactId="EBI-552743">
        <id>P24193</id>
    </interactant>
    <interactant intactId="EBI-9128507">
        <id>P30131</id>
        <label>hypF</label>
    </interactant>
    <organismsDiffer>false</organismsDiffer>
    <experiments>2</experiments>
</comment>
<comment type="PTM">
    <text evidence="1 2">Modified by HypF, which adds a carboxamido group to the thiolate of the C-terminal cysteine, yielding a protein-S-carboxamide. The carboxamido group is then dehydrated by HypE itself to yield a protein-thiocyanate.</text>
</comment>
<comment type="similarity">
    <text evidence="7">Belongs to the HypE family.</text>
</comment>
<comment type="sequence caution" evidence="7">
    <conflict type="erroneous initiation">
        <sequence resource="EMBL-CDS" id="AAA69240"/>
    </conflict>
</comment>
<comment type="sequence caution" evidence="7">
    <conflict type="erroneous initiation">
        <sequence resource="EMBL-CDS" id="BAE76807"/>
    </conflict>
</comment>
<comment type="sequence caution" evidence="7">
    <conflict type="erroneous initiation">
        <sequence resource="EMBL-CDS" id="CAA38416"/>
    </conflict>
</comment>
<name>HYPE_ECOLI</name>
<keyword id="KW-0002">3D-structure</keyword>
<keyword id="KW-0903">Direct protein sequencing</keyword>
<keyword id="KW-0456">Lyase</keyword>
<keyword id="KW-1185">Reference proteome</keyword>
<evidence type="ECO:0000269" key="1">
    <source>
    </source>
</evidence>
<evidence type="ECO:0000269" key="2">
    <source>
    </source>
</evidence>
<evidence type="ECO:0000269" key="3">
    <source>
    </source>
</evidence>
<evidence type="ECO:0000269" key="4">
    <source>
    </source>
</evidence>
<evidence type="ECO:0000269" key="5">
    <source>
    </source>
</evidence>
<evidence type="ECO:0000303" key="6">
    <source>
    </source>
</evidence>
<evidence type="ECO:0000305" key="7"/>
<evidence type="ECO:0007744" key="8">
    <source>
        <dbReference type="PDB" id="2I6R"/>
    </source>
</evidence>
<evidence type="ECO:0007829" key="9">
    <source>
        <dbReference type="PDB" id="2I6R"/>
    </source>
</evidence>
<protein>
    <recommendedName>
        <fullName evidence="7">Carbamoyl dehydratase HypE</fullName>
        <ecNumber evidence="1 2">4.2.1.-</ecNumber>
    </recommendedName>
    <alternativeName>
        <fullName evidence="7">Hydrogenase maturation factor HypE</fullName>
    </alternativeName>
</protein>
<sequence length="336" mass="35092">MNNIQLAHGSGGQAMQQLINSLFMEAFANPWLAEQEDQARLDLAQLVAEGDRLAFSTDSYVIDPLFFPGGNIGKLAICGTANDVAVSGAIPRYLSCGFILEEGLPMETLKAVVTSMAETARAAGIAIVTGDTKVVQRGAVDKLFINTAGMGAIPANIHWGAQTLTAGDVLLVSGTLGDHGATILNLREQLGLDGELVSDCAVLTPLIQTLRDIPGVKALRDATRGGVNAVVHEFAAACGCGIELSEAALPVKPAVRGVCELLGLDALNFANEGKLVIAVERNAAEQVLAALHSHPLGKDAALIGEVVERKGVRLAGLYGVKRTLDLPHAEPLPRIC</sequence>
<accession>P24193</accession>
<accession>Q2MA99</accession>
<accession>Q46886</accession>